<gene>
    <name type="primary">TAS2R31</name>
    <name type="synonym">TAS2R44</name>
</gene>
<name>T2R31_HUMAN</name>
<proteinExistence type="evidence at transcript level"/>
<organism>
    <name type="scientific">Homo sapiens</name>
    <name type="common">Human</name>
    <dbReference type="NCBI Taxonomy" id="9606"/>
    <lineage>
        <taxon>Eukaryota</taxon>
        <taxon>Metazoa</taxon>
        <taxon>Chordata</taxon>
        <taxon>Craniata</taxon>
        <taxon>Vertebrata</taxon>
        <taxon>Euteleostomi</taxon>
        <taxon>Mammalia</taxon>
        <taxon>Eutheria</taxon>
        <taxon>Euarchontoglires</taxon>
        <taxon>Primates</taxon>
        <taxon>Haplorrhini</taxon>
        <taxon>Catarrhini</taxon>
        <taxon>Hominidae</taxon>
        <taxon>Homo</taxon>
    </lineage>
</organism>
<feature type="chain" id="PRO_0000082309" description="Taste receptor type 2 member 31">
    <location>
        <begin position="1"/>
        <end position="309"/>
    </location>
</feature>
<feature type="topological domain" description="Extracellular" evidence="2">
    <location>
        <begin position="1"/>
        <end position="2"/>
    </location>
</feature>
<feature type="transmembrane region" description="Helical; Name=1" evidence="2">
    <location>
        <begin position="3"/>
        <end position="23"/>
    </location>
</feature>
<feature type="topological domain" description="Cytoplasmic" evidence="2">
    <location>
        <begin position="24"/>
        <end position="55"/>
    </location>
</feature>
<feature type="transmembrane region" description="Helical; Name=2" evidence="2">
    <location>
        <begin position="56"/>
        <end position="76"/>
    </location>
</feature>
<feature type="topological domain" description="Extracellular" evidence="2">
    <location>
        <begin position="77"/>
        <end position="100"/>
    </location>
</feature>
<feature type="transmembrane region" description="Helical; Name=3" evidence="2">
    <location>
        <begin position="101"/>
        <end position="121"/>
    </location>
</feature>
<feature type="topological domain" description="Cytoplasmic" evidence="2">
    <location>
        <begin position="122"/>
        <end position="126"/>
    </location>
</feature>
<feature type="transmembrane region" description="Helical; Name=4" evidence="2">
    <location>
        <begin position="127"/>
        <end position="147"/>
    </location>
</feature>
<feature type="topological domain" description="Extracellular" evidence="2">
    <location>
        <begin position="148"/>
        <end position="181"/>
    </location>
</feature>
<feature type="transmembrane region" description="Helical; Name=5" evidence="2">
    <location>
        <begin position="182"/>
        <end position="202"/>
    </location>
</feature>
<feature type="topological domain" description="Cytoplasmic" evidence="2">
    <location>
        <begin position="203"/>
        <end position="229"/>
    </location>
</feature>
<feature type="transmembrane region" description="Helical; Name=6" evidence="2">
    <location>
        <begin position="230"/>
        <end position="250"/>
    </location>
</feature>
<feature type="topological domain" description="Extracellular" evidence="2">
    <location>
        <begin position="251"/>
        <end position="259"/>
    </location>
</feature>
<feature type="transmembrane region" description="Helical; Name=7" evidence="2">
    <location>
        <begin position="260"/>
        <end position="280"/>
    </location>
</feature>
<feature type="topological domain" description="Cytoplasmic" evidence="2">
    <location>
        <begin position="281"/>
        <end position="309"/>
    </location>
</feature>
<feature type="glycosylation site" description="N-linked (GlcNAc...) asparagine" evidence="2">
    <location>
        <position position="161"/>
    </location>
</feature>
<feature type="sequence variant" id="VAR_030684" description="In dbSNP:rs10845295.">
    <original>R</original>
    <variation>W</variation>
    <location>
        <position position="35"/>
    </location>
</feature>
<feature type="sequence variant" id="VAR_030685" description="In dbSNP:rs10743938." evidence="3 4">
    <original>L</original>
    <variation>M</variation>
    <location>
        <position position="162"/>
    </location>
</feature>
<feature type="sequence variant" id="VAR_030686" description="In dbSNP:rs10845294.">
    <original>Q</original>
    <variation>E</variation>
    <location>
        <position position="217"/>
    </location>
</feature>
<feature type="sequence variant" id="VAR_030687" description="In dbSNP:rs10845293." evidence="4">
    <original>A</original>
    <variation>V</variation>
    <location>
        <position position="227"/>
    </location>
</feature>
<feature type="sequence variant" id="VAR_030688" description="In dbSNP:rs10772423." evidence="4">
    <original>V</original>
    <variation>I</variation>
    <location>
        <position position="240"/>
    </location>
</feature>
<feature type="sequence variant" id="VAR_062090" description="In dbSNP:rs12318612.">
    <original>P</original>
    <variation>R</variation>
    <location>
        <position position="276"/>
    </location>
</feature>
<accession>P59538</accession>
<accession>P59547</accession>
<accession>Q17R84</accession>
<accession>Q645X5</accession>
<comment type="function">
    <text evidence="1">Receptor that may play a role in the perception of bitterness and is gustducin-linked. May play a role in sensing the chemical composition of the gastrointestinal content. The activity of this receptor may stimulate alpha gustducin, mediate PLC-beta-2 activation and lead to the gating of TRPM5 (By similarity). Activated by the sulfonyl amide sweeteners saccharin and acesulfame K.</text>
</comment>
<comment type="subcellular location">
    <subcellularLocation>
        <location>Membrane</location>
        <topology>Multi-pass membrane protein</topology>
    </subcellularLocation>
</comment>
<comment type="tissue specificity">
    <text>Expressed in subsets of taste receptor cells of the tongue and exclusively in gustducin-positive cells.</text>
</comment>
<comment type="miscellaneous">
    <text>Most taste cells may be activated by a limited number of bitter compounds; individual taste cells can discriminate among bitter stimuli.</text>
</comment>
<comment type="similarity">
    <text evidence="5">Belongs to the G-protein coupled receptor T2R family.</text>
</comment>
<dbReference type="EMBL" id="AF494228">
    <property type="protein sequence ID" value="AAM19319.1"/>
    <property type="molecule type" value="Genomic_DNA"/>
</dbReference>
<dbReference type="EMBL" id="AY114090">
    <property type="protein sequence ID" value="AAM63540.1"/>
    <property type="molecule type" value="Genomic_DNA"/>
</dbReference>
<dbReference type="EMBL" id="AY724942">
    <property type="protein sequence ID" value="AAU21144.1"/>
    <property type="molecule type" value="Genomic_DNA"/>
</dbReference>
<dbReference type="EMBL" id="AC018630">
    <property type="status" value="NOT_ANNOTATED_CDS"/>
    <property type="molecule type" value="Genomic_DNA"/>
</dbReference>
<dbReference type="EMBL" id="BC117421">
    <property type="protein sequence ID" value="AAI17422.1"/>
    <property type="molecule type" value="mRNA"/>
</dbReference>
<dbReference type="CCDS" id="CCDS53747.1"/>
<dbReference type="RefSeq" id="NP_795366.2">
    <property type="nucleotide sequence ID" value="NM_176885.2"/>
</dbReference>
<dbReference type="SMR" id="P59538"/>
<dbReference type="BioGRID" id="129245">
    <property type="interactions" value="6"/>
</dbReference>
<dbReference type="FunCoup" id="P59538">
    <property type="interactions" value="255"/>
</dbReference>
<dbReference type="IntAct" id="P59538">
    <property type="interactions" value="6"/>
</dbReference>
<dbReference type="STRING" id="9606.ENSP00000375093"/>
<dbReference type="BindingDB" id="P59538"/>
<dbReference type="ChEMBL" id="CHEMBL2034804"/>
<dbReference type="DrugCentral" id="P59538"/>
<dbReference type="GuidetoPHARMACOLOGY" id="674"/>
<dbReference type="GlyCosmos" id="P59538">
    <property type="glycosylation" value="1 site, No reported glycans"/>
</dbReference>
<dbReference type="GlyGen" id="P59538">
    <property type="glycosylation" value="1 site"/>
</dbReference>
<dbReference type="iPTMnet" id="P59538"/>
<dbReference type="PhosphoSitePlus" id="P59538"/>
<dbReference type="BioMuta" id="TAS2R31"/>
<dbReference type="DMDM" id="338817946"/>
<dbReference type="PaxDb" id="9606-ENSP00000375093"/>
<dbReference type="ProteomicsDB" id="57145"/>
<dbReference type="Antibodypedia" id="57633">
    <property type="antibodies" value="82 antibodies from 19 providers"/>
</dbReference>
<dbReference type="DNASU" id="259290"/>
<dbReference type="Ensembl" id="ENST00000390675.2">
    <property type="protein sequence ID" value="ENSP00000375093.2"/>
    <property type="gene ID" value="ENSG00000256436.1"/>
</dbReference>
<dbReference type="Ensembl" id="ENST00000572376.1">
    <property type="protein sequence ID" value="ENSP00000459810.1"/>
    <property type="gene ID" value="ENSG00000263097.3"/>
</dbReference>
<dbReference type="GeneID" id="259290"/>
<dbReference type="KEGG" id="hsa:259290"/>
<dbReference type="MANE-Select" id="ENST00000390675.2">
    <property type="protein sequence ID" value="ENSP00000375093.2"/>
    <property type="RefSeq nucleotide sequence ID" value="NM_176885.2"/>
    <property type="RefSeq protein sequence ID" value="NP_795366.2"/>
</dbReference>
<dbReference type="UCSC" id="uc001qzo.1">
    <property type="organism name" value="human"/>
</dbReference>
<dbReference type="AGR" id="HGNC:19113"/>
<dbReference type="CTD" id="259290"/>
<dbReference type="GeneCards" id="TAS2R31"/>
<dbReference type="HGNC" id="HGNC:19113">
    <property type="gene designation" value="TAS2R31"/>
</dbReference>
<dbReference type="HPA" id="ENSG00000256436">
    <property type="expression patterns" value="Not detected"/>
</dbReference>
<dbReference type="MIM" id="612669">
    <property type="type" value="gene"/>
</dbReference>
<dbReference type="neXtProt" id="NX_P59538"/>
<dbReference type="OpenTargets" id="ENSG00000256436"/>
<dbReference type="VEuPathDB" id="HostDB:ENSG00000256436"/>
<dbReference type="eggNOG" id="ENOG502TE6U">
    <property type="taxonomic scope" value="Eukaryota"/>
</dbReference>
<dbReference type="GeneTree" id="ENSGT01100000263477"/>
<dbReference type="HOGENOM" id="CLU_072337_2_0_1"/>
<dbReference type="InParanoid" id="P59538"/>
<dbReference type="OMA" id="FMICEAV"/>
<dbReference type="OrthoDB" id="8876749at2759"/>
<dbReference type="PAN-GO" id="P59538">
    <property type="GO annotations" value="3 GO annotations based on evolutionary models"/>
</dbReference>
<dbReference type="PhylomeDB" id="P59538"/>
<dbReference type="TreeFam" id="TF335891"/>
<dbReference type="PathwayCommons" id="P59538"/>
<dbReference type="Reactome" id="R-HSA-418594">
    <property type="pathway name" value="G alpha (i) signalling events"/>
</dbReference>
<dbReference type="Reactome" id="R-HSA-420499">
    <property type="pathway name" value="Class C/3 (Metabotropic glutamate/pheromone receptors)"/>
</dbReference>
<dbReference type="Reactome" id="R-HSA-9717207">
    <property type="pathway name" value="Sensory perception of sweet, bitter, and umami (glutamate) taste"/>
</dbReference>
<dbReference type="BioGRID-ORCS" id="259290">
    <property type="hits" value="10 hits in 1131 CRISPR screens"/>
</dbReference>
<dbReference type="GeneWiki" id="TAS2R31"/>
<dbReference type="GenomeRNAi" id="259290"/>
<dbReference type="Pharos" id="P59538">
    <property type="development level" value="Tchem"/>
</dbReference>
<dbReference type="PRO" id="PR:P59538"/>
<dbReference type="Proteomes" id="UP000005640">
    <property type="component" value="Chromosome 12"/>
</dbReference>
<dbReference type="RNAct" id="P59538">
    <property type="molecule type" value="protein"/>
</dbReference>
<dbReference type="Bgee" id="ENSG00000256436">
    <property type="expression patterns" value="Expressed in male germ line stem cell (sensu Vertebrata) in testis and 99 other cell types or tissues"/>
</dbReference>
<dbReference type="GO" id="GO:0016020">
    <property type="term" value="C:membrane"/>
    <property type="evidence" value="ECO:0000318"/>
    <property type="project" value="GO_Central"/>
</dbReference>
<dbReference type="GO" id="GO:0005886">
    <property type="term" value="C:plasma membrane"/>
    <property type="evidence" value="ECO:0000304"/>
    <property type="project" value="Reactome"/>
</dbReference>
<dbReference type="GO" id="GO:0033038">
    <property type="term" value="F:bitter taste receptor activity"/>
    <property type="evidence" value="ECO:0000314"/>
    <property type="project" value="UniProtKB"/>
</dbReference>
<dbReference type="GO" id="GO:0004930">
    <property type="term" value="F:G protein-coupled receptor activity"/>
    <property type="evidence" value="ECO:0007669"/>
    <property type="project" value="UniProtKB-KW"/>
</dbReference>
<dbReference type="GO" id="GO:0001580">
    <property type="term" value="P:detection of chemical stimulus involved in sensory perception of bitter taste"/>
    <property type="evidence" value="ECO:0000314"/>
    <property type="project" value="UniProtKB"/>
</dbReference>
<dbReference type="CDD" id="cd15027">
    <property type="entry name" value="7tm_TAS2R43-like"/>
    <property type="match status" value="1"/>
</dbReference>
<dbReference type="FunFam" id="1.20.1070.10:FF:000042">
    <property type="entry name" value="Taste receptor type 2 member 7"/>
    <property type="match status" value="1"/>
</dbReference>
<dbReference type="Gene3D" id="1.20.1070.10">
    <property type="entry name" value="Rhodopsin 7-helix transmembrane proteins"/>
    <property type="match status" value="1"/>
</dbReference>
<dbReference type="InterPro" id="IPR007960">
    <property type="entry name" value="TAS2R"/>
</dbReference>
<dbReference type="PANTHER" id="PTHR11394">
    <property type="entry name" value="TASTE RECEPTOR TYPE 2"/>
    <property type="match status" value="1"/>
</dbReference>
<dbReference type="PANTHER" id="PTHR11394:SF129">
    <property type="entry name" value="TASTE RECEPTOR TYPE 2 MEMBER 31"/>
    <property type="match status" value="1"/>
</dbReference>
<dbReference type="Pfam" id="PF05296">
    <property type="entry name" value="TAS2R"/>
    <property type="match status" value="1"/>
</dbReference>
<dbReference type="SUPFAM" id="SSF81321">
    <property type="entry name" value="Family A G protein-coupled receptor-like"/>
    <property type="match status" value="1"/>
</dbReference>
<reference key="1">
    <citation type="journal article" date="2002" name="Nat. Genet.">
        <title>The human TAS2R16 receptor mediates bitter taste in response to beta-glucopyranosides.</title>
        <authorList>
            <person name="Bufe B."/>
            <person name="Hofmann T."/>
            <person name="Krautwurst D."/>
            <person name="Raguse J.-D."/>
            <person name="Meyerhof W."/>
        </authorList>
    </citation>
    <scope>NUCLEOTIDE SEQUENCE [GENOMIC DNA]</scope>
    <scope>VARIANT MET-162</scope>
</reference>
<reference key="2">
    <citation type="journal article" date="2002" name="Cytogenet. Genome Res.">
        <title>Identification and characterization of human taste receptor genes belonging to the TAS2R family.</title>
        <authorList>
            <person name="Conte C."/>
            <person name="Ebeling M."/>
            <person name="Marcuz A."/>
            <person name="Nef P."/>
            <person name="Andres-Barquin P.J."/>
        </authorList>
    </citation>
    <scope>NUCLEOTIDE SEQUENCE [GENOMIC DNA]</scope>
</reference>
<reference key="3">
    <citation type="journal article" date="2005" name="Mol. Biol. Evol.">
        <title>Evolution of bitter taste receptors in humans and apes.</title>
        <authorList>
            <person name="Fischer A."/>
            <person name="Gilad Y."/>
            <person name="Man O."/>
            <person name="Paeaebo S."/>
        </authorList>
    </citation>
    <scope>NUCLEOTIDE SEQUENCE [GENOMIC DNA]</scope>
    <scope>VARIANTS MET-162; VAL-227 AND ILE-240</scope>
</reference>
<reference key="4">
    <citation type="journal article" date="2006" name="Nature">
        <title>The finished DNA sequence of human chromosome 12.</title>
        <authorList>
            <person name="Scherer S.E."/>
            <person name="Muzny D.M."/>
            <person name="Buhay C.J."/>
            <person name="Chen R."/>
            <person name="Cree A."/>
            <person name="Ding Y."/>
            <person name="Dugan-Rocha S."/>
            <person name="Gill R."/>
            <person name="Gunaratne P."/>
            <person name="Harris R.A."/>
            <person name="Hawes A.C."/>
            <person name="Hernandez J."/>
            <person name="Hodgson A.V."/>
            <person name="Hume J."/>
            <person name="Jackson A."/>
            <person name="Khan Z.M."/>
            <person name="Kovar-Smith C."/>
            <person name="Lewis L.R."/>
            <person name="Lozado R.J."/>
            <person name="Metzker M.L."/>
            <person name="Milosavljevic A."/>
            <person name="Miner G.R."/>
            <person name="Montgomery K.T."/>
            <person name="Morgan M.B."/>
            <person name="Nazareth L.V."/>
            <person name="Scott G."/>
            <person name="Sodergren E."/>
            <person name="Song X.-Z."/>
            <person name="Steffen D."/>
            <person name="Lovering R.C."/>
            <person name="Wheeler D.A."/>
            <person name="Worley K.C."/>
            <person name="Yuan Y."/>
            <person name="Zhang Z."/>
            <person name="Adams C.Q."/>
            <person name="Ansari-Lari M.A."/>
            <person name="Ayele M."/>
            <person name="Brown M.J."/>
            <person name="Chen G."/>
            <person name="Chen Z."/>
            <person name="Clerc-Blankenburg K.P."/>
            <person name="Davis C."/>
            <person name="Delgado O."/>
            <person name="Dinh H.H."/>
            <person name="Draper H."/>
            <person name="Gonzalez-Garay M.L."/>
            <person name="Havlak P."/>
            <person name="Jackson L.R."/>
            <person name="Jacob L.S."/>
            <person name="Kelly S.H."/>
            <person name="Li L."/>
            <person name="Li Z."/>
            <person name="Liu J."/>
            <person name="Liu W."/>
            <person name="Lu J."/>
            <person name="Maheshwari M."/>
            <person name="Nguyen B.-V."/>
            <person name="Okwuonu G.O."/>
            <person name="Pasternak S."/>
            <person name="Perez L.M."/>
            <person name="Plopper F.J.H."/>
            <person name="Santibanez J."/>
            <person name="Shen H."/>
            <person name="Tabor P.E."/>
            <person name="Verduzco D."/>
            <person name="Waldron L."/>
            <person name="Wang Q."/>
            <person name="Williams G.A."/>
            <person name="Zhang J."/>
            <person name="Zhou J."/>
            <person name="Allen C.C."/>
            <person name="Amin A.G."/>
            <person name="Anyalebechi V."/>
            <person name="Bailey M."/>
            <person name="Barbaria J.A."/>
            <person name="Bimage K.E."/>
            <person name="Bryant N.P."/>
            <person name="Burch P.E."/>
            <person name="Burkett C.E."/>
            <person name="Burrell K.L."/>
            <person name="Calderon E."/>
            <person name="Cardenas V."/>
            <person name="Carter K."/>
            <person name="Casias K."/>
            <person name="Cavazos I."/>
            <person name="Cavazos S.R."/>
            <person name="Ceasar H."/>
            <person name="Chacko J."/>
            <person name="Chan S.N."/>
            <person name="Chavez D."/>
            <person name="Christopoulos C."/>
            <person name="Chu J."/>
            <person name="Cockrell R."/>
            <person name="Cox C.D."/>
            <person name="Dang M."/>
            <person name="Dathorne S.R."/>
            <person name="David R."/>
            <person name="Davis C.M."/>
            <person name="Davy-Carroll L."/>
            <person name="Deshazo D.R."/>
            <person name="Donlin J.E."/>
            <person name="D'Souza L."/>
            <person name="Eaves K.A."/>
            <person name="Egan A."/>
            <person name="Emery-Cohen A.J."/>
            <person name="Escotto M."/>
            <person name="Flagg N."/>
            <person name="Forbes L.D."/>
            <person name="Gabisi A.M."/>
            <person name="Garza M."/>
            <person name="Hamilton C."/>
            <person name="Henderson N."/>
            <person name="Hernandez O."/>
            <person name="Hines S."/>
            <person name="Hogues M.E."/>
            <person name="Huang M."/>
            <person name="Idlebird D.G."/>
            <person name="Johnson R."/>
            <person name="Jolivet A."/>
            <person name="Jones S."/>
            <person name="Kagan R."/>
            <person name="King L.M."/>
            <person name="Leal B."/>
            <person name="Lebow H."/>
            <person name="Lee S."/>
            <person name="LeVan J.M."/>
            <person name="Lewis L.C."/>
            <person name="London P."/>
            <person name="Lorensuhewa L.M."/>
            <person name="Loulseged H."/>
            <person name="Lovett D.A."/>
            <person name="Lucier A."/>
            <person name="Lucier R.L."/>
            <person name="Ma J."/>
            <person name="Madu R.C."/>
            <person name="Mapua P."/>
            <person name="Martindale A.D."/>
            <person name="Martinez E."/>
            <person name="Massey E."/>
            <person name="Mawhiney S."/>
            <person name="Meador M.G."/>
            <person name="Mendez S."/>
            <person name="Mercado C."/>
            <person name="Mercado I.C."/>
            <person name="Merritt C.E."/>
            <person name="Miner Z.L."/>
            <person name="Minja E."/>
            <person name="Mitchell T."/>
            <person name="Mohabbat F."/>
            <person name="Mohabbat K."/>
            <person name="Montgomery B."/>
            <person name="Moore N."/>
            <person name="Morris S."/>
            <person name="Munidasa M."/>
            <person name="Ngo R.N."/>
            <person name="Nguyen N.B."/>
            <person name="Nickerson E."/>
            <person name="Nwaokelemeh O.O."/>
            <person name="Nwokenkwo S."/>
            <person name="Obregon M."/>
            <person name="Oguh M."/>
            <person name="Oragunye N."/>
            <person name="Oviedo R.J."/>
            <person name="Parish B.J."/>
            <person name="Parker D.N."/>
            <person name="Parrish J."/>
            <person name="Parks K.L."/>
            <person name="Paul H.A."/>
            <person name="Payton B.A."/>
            <person name="Perez A."/>
            <person name="Perrin W."/>
            <person name="Pickens A."/>
            <person name="Primus E.L."/>
            <person name="Pu L.-L."/>
            <person name="Puazo M."/>
            <person name="Quiles M.M."/>
            <person name="Quiroz J.B."/>
            <person name="Rabata D."/>
            <person name="Reeves K."/>
            <person name="Ruiz S.J."/>
            <person name="Shao H."/>
            <person name="Sisson I."/>
            <person name="Sonaike T."/>
            <person name="Sorelle R.P."/>
            <person name="Sutton A.E."/>
            <person name="Svatek A.F."/>
            <person name="Svetz L.A."/>
            <person name="Tamerisa K.S."/>
            <person name="Taylor T.R."/>
            <person name="Teague B."/>
            <person name="Thomas N."/>
            <person name="Thorn R.D."/>
            <person name="Trejos Z.Y."/>
            <person name="Trevino B.K."/>
            <person name="Ukegbu O.N."/>
            <person name="Urban J.B."/>
            <person name="Vasquez L.I."/>
            <person name="Vera V.A."/>
            <person name="Villasana D.M."/>
            <person name="Wang L."/>
            <person name="Ward-Moore S."/>
            <person name="Warren J.T."/>
            <person name="Wei X."/>
            <person name="White F."/>
            <person name="Williamson A.L."/>
            <person name="Wleczyk R."/>
            <person name="Wooden H.S."/>
            <person name="Wooden S.H."/>
            <person name="Yen J."/>
            <person name="Yoon L."/>
            <person name="Yoon V."/>
            <person name="Zorrilla S.E."/>
            <person name="Nelson D."/>
            <person name="Kucherlapati R."/>
            <person name="Weinstock G."/>
            <person name="Gibbs R.A."/>
        </authorList>
    </citation>
    <scope>NUCLEOTIDE SEQUENCE [LARGE SCALE GENOMIC DNA]</scope>
</reference>
<reference key="5">
    <citation type="journal article" date="2004" name="Genome Res.">
        <title>The status, quality, and expansion of the NIH full-length cDNA project: the Mammalian Gene Collection (MGC).</title>
        <authorList>
            <consortium name="The MGC Project Team"/>
        </authorList>
    </citation>
    <scope>NUCLEOTIDE SEQUENCE [LARGE SCALE MRNA]</scope>
    <source>
        <tissue>Brain</tissue>
    </source>
</reference>
<reference key="6">
    <citation type="journal article" date="2002" name="Curr. Opin. Neurobiol.">
        <title>Receptors for bitter and sweet taste.</title>
        <authorList>
            <person name="Montmayeur J.-P."/>
            <person name="Matsunami H."/>
        </authorList>
    </citation>
    <scope>REVIEW</scope>
</reference>
<reference key="7">
    <citation type="journal article" date="2002" name="J. Biol. Chem.">
        <title>Molecular mechanisms of bitter and sweet taste transduction.</title>
        <authorList>
            <person name="Margolskee R.F."/>
        </authorList>
    </citation>
    <scope>REVIEW</scope>
</reference>
<reference key="8">
    <citation type="journal article" date="2003" name="Cell">
        <title>Coding of sweet, bitter, and umami tastes: different receptor cells sharing similar signaling pathways.</title>
        <authorList>
            <person name="Zhang Y."/>
            <person name="Hoon M.A."/>
            <person name="Chandrashekar J."/>
            <person name="Mueller K.L."/>
            <person name="Cook B."/>
            <person name="Wu D."/>
            <person name="Zuker C.S."/>
            <person name="Ryba N.J."/>
        </authorList>
    </citation>
    <scope>REVIEW</scope>
</reference>
<reference key="9">
    <citation type="journal article" date="2004" name="J. Neurosci.">
        <title>Bitter taste receptors for saccharin and acesulfame K.</title>
        <authorList>
            <person name="Kuhn C."/>
            <person name="Bufe B."/>
            <person name="Winnig M."/>
            <person name="Hofmann T."/>
            <person name="Frank O."/>
            <person name="Behrens M."/>
            <person name="Lewtschenko T."/>
            <person name="Slack J.P."/>
            <person name="Ward C.D."/>
            <person name="Meyerhof W."/>
        </authorList>
    </citation>
    <scope>ACTIVATION BY SACCHARIN AND ACESULFAME K</scope>
</reference>
<sequence length="309" mass="35278">MTTFIPIIFSSVVVVLFVIGNFANGFIALVNSIERVKRQKISFADQILTALAVSRVGLLWVLLLNWYSTVFNPAFYSVEVRTTAYNVWAVTGHFSNWLATSLSIFYLLKIANFSNLIFLHLKRRVKSVILVMLLGPLLFLACQLFVINMKEIVRTKEYEGNLTWKIKLRSAVYLSDATVTTLGNLVPFTLTLLCFLLLICSLCKHLKKMQLHGKGSQDPSTKVHIKALQTVIFFLLLCAVYFLSIMISVWSFGSLENKPVFMFCKAIRFSYPSIHPFILIWGNKKLKQTFLSVLRQVRYWVKGEKPSSP</sequence>
<protein>
    <recommendedName>
        <fullName>Taste receptor type 2 member 31</fullName>
        <shortName>T2R31</shortName>
    </recommendedName>
    <alternativeName>
        <fullName>Taste receptor type 2 member 44</fullName>
        <shortName>T2R44</shortName>
    </alternativeName>
    <alternativeName>
        <fullName>Taste receptor type 2 member 53</fullName>
        <shortName>T2R53</shortName>
    </alternativeName>
</protein>
<evidence type="ECO:0000250" key="1"/>
<evidence type="ECO:0000255" key="2"/>
<evidence type="ECO:0000269" key="3">
    <source>
    </source>
</evidence>
<evidence type="ECO:0000269" key="4">
    <source>
    </source>
</evidence>
<evidence type="ECO:0000305" key="5"/>
<keyword id="KW-0297">G-protein coupled receptor</keyword>
<keyword id="KW-0325">Glycoprotein</keyword>
<keyword id="KW-0472">Membrane</keyword>
<keyword id="KW-0675">Receptor</keyword>
<keyword id="KW-1185">Reference proteome</keyword>
<keyword id="KW-0716">Sensory transduction</keyword>
<keyword id="KW-0919">Taste</keyword>
<keyword id="KW-0807">Transducer</keyword>
<keyword id="KW-0812">Transmembrane</keyword>
<keyword id="KW-1133">Transmembrane helix</keyword>